<evidence type="ECO:0000255" key="1">
    <source>
        <dbReference type="HAMAP-Rule" id="MF_01576"/>
    </source>
</evidence>
<accession>A4IQS0</accession>
<feature type="chain" id="PRO_0000305820" description="Bifunctional protein FolD">
    <location>
        <begin position="1"/>
        <end position="284"/>
    </location>
</feature>
<feature type="binding site" evidence="1">
    <location>
        <begin position="165"/>
        <end position="167"/>
    </location>
    <ligand>
        <name>NADP(+)</name>
        <dbReference type="ChEBI" id="CHEBI:58349"/>
    </ligand>
</feature>
<feature type="binding site" evidence="1">
    <location>
        <position position="190"/>
    </location>
    <ligand>
        <name>NADP(+)</name>
        <dbReference type="ChEBI" id="CHEBI:58349"/>
    </ligand>
</feature>
<feature type="binding site" evidence="1">
    <location>
        <position position="231"/>
    </location>
    <ligand>
        <name>NADP(+)</name>
        <dbReference type="ChEBI" id="CHEBI:58349"/>
    </ligand>
</feature>
<dbReference type="EC" id="1.5.1.5" evidence="1"/>
<dbReference type="EC" id="3.5.4.9" evidence="1"/>
<dbReference type="EMBL" id="CP000557">
    <property type="protein sequence ID" value="ABO67674.1"/>
    <property type="molecule type" value="Genomic_DNA"/>
</dbReference>
<dbReference type="RefSeq" id="WP_011887783.1">
    <property type="nucleotide sequence ID" value="NC_009328.1"/>
</dbReference>
<dbReference type="SMR" id="A4IQS0"/>
<dbReference type="GeneID" id="87623577"/>
<dbReference type="KEGG" id="gtn:GTNG_2327"/>
<dbReference type="eggNOG" id="COG0190">
    <property type="taxonomic scope" value="Bacteria"/>
</dbReference>
<dbReference type="HOGENOM" id="CLU_034045_2_1_9"/>
<dbReference type="UniPathway" id="UPA00193"/>
<dbReference type="Proteomes" id="UP000001578">
    <property type="component" value="Chromosome"/>
</dbReference>
<dbReference type="GO" id="GO:0005829">
    <property type="term" value="C:cytosol"/>
    <property type="evidence" value="ECO:0007669"/>
    <property type="project" value="TreeGrafter"/>
</dbReference>
<dbReference type="GO" id="GO:0004477">
    <property type="term" value="F:methenyltetrahydrofolate cyclohydrolase activity"/>
    <property type="evidence" value="ECO:0007669"/>
    <property type="project" value="UniProtKB-UniRule"/>
</dbReference>
<dbReference type="GO" id="GO:0004488">
    <property type="term" value="F:methylenetetrahydrofolate dehydrogenase (NADP+) activity"/>
    <property type="evidence" value="ECO:0007669"/>
    <property type="project" value="UniProtKB-UniRule"/>
</dbReference>
<dbReference type="GO" id="GO:0000105">
    <property type="term" value="P:L-histidine biosynthetic process"/>
    <property type="evidence" value="ECO:0007669"/>
    <property type="project" value="UniProtKB-KW"/>
</dbReference>
<dbReference type="GO" id="GO:0009086">
    <property type="term" value="P:methionine biosynthetic process"/>
    <property type="evidence" value="ECO:0007669"/>
    <property type="project" value="UniProtKB-KW"/>
</dbReference>
<dbReference type="GO" id="GO:0006164">
    <property type="term" value="P:purine nucleotide biosynthetic process"/>
    <property type="evidence" value="ECO:0007669"/>
    <property type="project" value="UniProtKB-KW"/>
</dbReference>
<dbReference type="GO" id="GO:0035999">
    <property type="term" value="P:tetrahydrofolate interconversion"/>
    <property type="evidence" value="ECO:0007669"/>
    <property type="project" value="UniProtKB-UniRule"/>
</dbReference>
<dbReference type="CDD" id="cd01080">
    <property type="entry name" value="NAD_bind_m-THF_DH_Cyclohyd"/>
    <property type="match status" value="1"/>
</dbReference>
<dbReference type="FunFam" id="3.40.50.10860:FF:000001">
    <property type="entry name" value="Bifunctional protein FolD"/>
    <property type="match status" value="1"/>
</dbReference>
<dbReference type="FunFam" id="3.40.50.720:FF:000094">
    <property type="entry name" value="Bifunctional protein FolD"/>
    <property type="match status" value="1"/>
</dbReference>
<dbReference type="Gene3D" id="3.40.50.10860">
    <property type="entry name" value="Leucine Dehydrogenase, chain A, domain 1"/>
    <property type="match status" value="1"/>
</dbReference>
<dbReference type="Gene3D" id="3.40.50.720">
    <property type="entry name" value="NAD(P)-binding Rossmann-like Domain"/>
    <property type="match status" value="1"/>
</dbReference>
<dbReference type="HAMAP" id="MF_01576">
    <property type="entry name" value="THF_DHG_CYH"/>
    <property type="match status" value="1"/>
</dbReference>
<dbReference type="InterPro" id="IPR046346">
    <property type="entry name" value="Aminoacid_DH-like_N_sf"/>
</dbReference>
<dbReference type="InterPro" id="IPR036291">
    <property type="entry name" value="NAD(P)-bd_dom_sf"/>
</dbReference>
<dbReference type="InterPro" id="IPR000672">
    <property type="entry name" value="THF_DH/CycHdrlase"/>
</dbReference>
<dbReference type="InterPro" id="IPR020630">
    <property type="entry name" value="THF_DH/CycHdrlase_cat_dom"/>
</dbReference>
<dbReference type="InterPro" id="IPR020867">
    <property type="entry name" value="THF_DH/CycHdrlase_CS"/>
</dbReference>
<dbReference type="InterPro" id="IPR020631">
    <property type="entry name" value="THF_DH/CycHdrlase_NAD-bd_dom"/>
</dbReference>
<dbReference type="NCBIfam" id="NF008058">
    <property type="entry name" value="PRK10792.1"/>
    <property type="match status" value="1"/>
</dbReference>
<dbReference type="NCBIfam" id="NF010783">
    <property type="entry name" value="PRK14186.1"/>
    <property type="match status" value="1"/>
</dbReference>
<dbReference type="NCBIfam" id="NF010786">
    <property type="entry name" value="PRK14189.1"/>
    <property type="match status" value="1"/>
</dbReference>
<dbReference type="PANTHER" id="PTHR48099:SF5">
    <property type="entry name" value="C-1-TETRAHYDROFOLATE SYNTHASE, CYTOPLASMIC"/>
    <property type="match status" value="1"/>
</dbReference>
<dbReference type="PANTHER" id="PTHR48099">
    <property type="entry name" value="C-1-TETRAHYDROFOLATE SYNTHASE, CYTOPLASMIC-RELATED"/>
    <property type="match status" value="1"/>
</dbReference>
<dbReference type="Pfam" id="PF00763">
    <property type="entry name" value="THF_DHG_CYH"/>
    <property type="match status" value="1"/>
</dbReference>
<dbReference type="Pfam" id="PF02882">
    <property type="entry name" value="THF_DHG_CYH_C"/>
    <property type="match status" value="1"/>
</dbReference>
<dbReference type="PRINTS" id="PR00085">
    <property type="entry name" value="THFDHDRGNASE"/>
</dbReference>
<dbReference type="SUPFAM" id="SSF53223">
    <property type="entry name" value="Aminoacid dehydrogenase-like, N-terminal domain"/>
    <property type="match status" value="1"/>
</dbReference>
<dbReference type="SUPFAM" id="SSF51735">
    <property type="entry name" value="NAD(P)-binding Rossmann-fold domains"/>
    <property type="match status" value="1"/>
</dbReference>
<dbReference type="PROSITE" id="PS00766">
    <property type="entry name" value="THF_DHG_CYH_1"/>
    <property type="match status" value="1"/>
</dbReference>
<dbReference type="PROSITE" id="PS00767">
    <property type="entry name" value="THF_DHG_CYH_2"/>
    <property type="match status" value="1"/>
</dbReference>
<proteinExistence type="inferred from homology"/>
<comment type="function">
    <text evidence="1">Catalyzes the oxidation of 5,10-methylenetetrahydrofolate to 5,10-methenyltetrahydrofolate and then the hydrolysis of 5,10-methenyltetrahydrofolate to 10-formyltetrahydrofolate.</text>
</comment>
<comment type="catalytic activity">
    <reaction evidence="1">
        <text>(6R)-5,10-methylene-5,6,7,8-tetrahydrofolate + NADP(+) = (6R)-5,10-methenyltetrahydrofolate + NADPH</text>
        <dbReference type="Rhea" id="RHEA:22812"/>
        <dbReference type="ChEBI" id="CHEBI:15636"/>
        <dbReference type="ChEBI" id="CHEBI:57455"/>
        <dbReference type="ChEBI" id="CHEBI:57783"/>
        <dbReference type="ChEBI" id="CHEBI:58349"/>
        <dbReference type="EC" id="1.5.1.5"/>
    </reaction>
</comment>
<comment type="catalytic activity">
    <reaction evidence="1">
        <text>(6R)-5,10-methenyltetrahydrofolate + H2O = (6R)-10-formyltetrahydrofolate + H(+)</text>
        <dbReference type="Rhea" id="RHEA:23700"/>
        <dbReference type="ChEBI" id="CHEBI:15377"/>
        <dbReference type="ChEBI" id="CHEBI:15378"/>
        <dbReference type="ChEBI" id="CHEBI:57455"/>
        <dbReference type="ChEBI" id="CHEBI:195366"/>
        <dbReference type="EC" id="3.5.4.9"/>
    </reaction>
</comment>
<comment type="pathway">
    <text evidence="1">One-carbon metabolism; tetrahydrofolate interconversion.</text>
</comment>
<comment type="subunit">
    <text evidence="1">Homodimer.</text>
</comment>
<comment type="similarity">
    <text evidence="1">Belongs to the tetrahydrofolate dehydrogenase/cyclohydrolase family.</text>
</comment>
<reference key="1">
    <citation type="journal article" date="2007" name="Proc. Natl. Acad. Sci. U.S.A.">
        <title>Genome and proteome of long-chain alkane degrading Geobacillus thermodenitrificans NG80-2 isolated from a deep-subsurface oil reservoir.</title>
        <authorList>
            <person name="Feng L."/>
            <person name="Wang W."/>
            <person name="Cheng J."/>
            <person name="Ren Y."/>
            <person name="Zhao G."/>
            <person name="Gao C."/>
            <person name="Tang Y."/>
            <person name="Liu X."/>
            <person name="Han W."/>
            <person name="Peng X."/>
            <person name="Liu R."/>
            <person name="Wang L."/>
        </authorList>
    </citation>
    <scope>NUCLEOTIDE SEQUENCE [LARGE SCALE GENOMIC DNA]</scope>
    <source>
        <strain>NG80-2</strain>
    </source>
</reference>
<keyword id="KW-0028">Amino-acid biosynthesis</keyword>
<keyword id="KW-0368">Histidine biosynthesis</keyword>
<keyword id="KW-0378">Hydrolase</keyword>
<keyword id="KW-0486">Methionine biosynthesis</keyword>
<keyword id="KW-0511">Multifunctional enzyme</keyword>
<keyword id="KW-0521">NADP</keyword>
<keyword id="KW-0554">One-carbon metabolism</keyword>
<keyword id="KW-0560">Oxidoreductase</keyword>
<keyword id="KW-0658">Purine biosynthesis</keyword>
<sequence length="284" mass="30033">MTAQIISGTELAKTIRAELADEVAKLKANGIEPGLAVILVGDDPASHSYVKGKQKACAEVGIRSLLYTFPATISEEELLAKIQELNADPTVHGILVQLPLPAHIREWSVIETIAPEKDVDGFHPINVGKMMIGQPAFLPCTPHGVLVMVKSAGIDIAGKHVVVVGRSNIVGKPVGQLFLREHATVTYAHSKTPDLAAITRQADILIVAVGKARLIGPEHVKPGAVVIDVGVNRLESGKLCGDVDFDAVKEVASYVTPVPGGVGPMTITMLLHNTMEAARQLAAK</sequence>
<name>FOLD_GEOTN</name>
<gene>
    <name evidence="1" type="primary">folD</name>
    <name type="ordered locus">GTNG_2327</name>
</gene>
<protein>
    <recommendedName>
        <fullName evidence="1">Bifunctional protein FolD</fullName>
    </recommendedName>
    <domain>
        <recommendedName>
            <fullName evidence="1">Methylenetetrahydrofolate dehydrogenase</fullName>
            <ecNumber evidence="1">1.5.1.5</ecNumber>
        </recommendedName>
    </domain>
    <domain>
        <recommendedName>
            <fullName evidence="1">Methenyltetrahydrofolate cyclohydrolase</fullName>
            <ecNumber evidence="1">3.5.4.9</ecNumber>
        </recommendedName>
    </domain>
</protein>
<organism>
    <name type="scientific">Geobacillus thermodenitrificans (strain NG80-2)</name>
    <dbReference type="NCBI Taxonomy" id="420246"/>
    <lineage>
        <taxon>Bacteria</taxon>
        <taxon>Bacillati</taxon>
        <taxon>Bacillota</taxon>
        <taxon>Bacilli</taxon>
        <taxon>Bacillales</taxon>
        <taxon>Anoxybacillaceae</taxon>
        <taxon>Geobacillus</taxon>
    </lineage>
</organism>